<organism>
    <name type="scientific">Salmonella choleraesuis (strain SC-B67)</name>
    <dbReference type="NCBI Taxonomy" id="321314"/>
    <lineage>
        <taxon>Bacteria</taxon>
        <taxon>Pseudomonadati</taxon>
        <taxon>Pseudomonadota</taxon>
        <taxon>Gammaproteobacteria</taxon>
        <taxon>Enterobacterales</taxon>
        <taxon>Enterobacteriaceae</taxon>
        <taxon>Salmonella</taxon>
    </lineage>
</organism>
<dbReference type="EMBL" id="AE017220">
    <property type="protein sequence ID" value="AAX67557.1"/>
    <property type="molecule type" value="Genomic_DNA"/>
</dbReference>
<dbReference type="RefSeq" id="WP_001519051.1">
    <property type="nucleotide sequence ID" value="NC_006905.1"/>
</dbReference>
<dbReference type="SMR" id="Q57IA5"/>
<dbReference type="KEGG" id="sec:SCH_3651"/>
<dbReference type="HOGENOM" id="CLU_064548_3_1_6"/>
<dbReference type="Proteomes" id="UP000000538">
    <property type="component" value="Chromosome"/>
</dbReference>
<dbReference type="GO" id="GO:0022625">
    <property type="term" value="C:cytosolic large ribosomal subunit"/>
    <property type="evidence" value="ECO:0007669"/>
    <property type="project" value="TreeGrafter"/>
</dbReference>
<dbReference type="GO" id="GO:0003735">
    <property type="term" value="F:structural constituent of ribosome"/>
    <property type="evidence" value="ECO:0007669"/>
    <property type="project" value="InterPro"/>
</dbReference>
<dbReference type="GO" id="GO:0006412">
    <property type="term" value="P:translation"/>
    <property type="evidence" value="ECO:0007669"/>
    <property type="project" value="UniProtKB-UniRule"/>
</dbReference>
<dbReference type="FunFam" id="2.30.170.40:FF:000001">
    <property type="entry name" value="50S ribosomal protein L28"/>
    <property type="match status" value="1"/>
</dbReference>
<dbReference type="Gene3D" id="2.30.170.40">
    <property type="entry name" value="Ribosomal protein L28/L24"/>
    <property type="match status" value="1"/>
</dbReference>
<dbReference type="HAMAP" id="MF_00373">
    <property type="entry name" value="Ribosomal_bL28"/>
    <property type="match status" value="1"/>
</dbReference>
<dbReference type="InterPro" id="IPR026569">
    <property type="entry name" value="Ribosomal_bL28"/>
</dbReference>
<dbReference type="InterPro" id="IPR034704">
    <property type="entry name" value="Ribosomal_bL28/bL31-like_sf"/>
</dbReference>
<dbReference type="InterPro" id="IPR001383">
    <property type="entry name" value="Ribosomal_bL28_bact-type"/>
</dbReference>
<dbReference type="InterPro" id="IPR037147">
    <property type="entry name" value="Ribosomal_bL28_sf"/>
</dbReference>
<dbReference type="NCBIfam" id="TIGR00009">
    <property type="entry name" value="L28"/>
    <property type="match status" value="1"/>
</dbReference>
<dbReference type="PANTHER" id="PTHR13528">
    <property type="entry name" value="39S RIBOSOMAL PROTEIN L28, MITOCHONDRIAL"/>
    <property type="match status" value="1"/>
</dbReference>
<dbReference type="PANTHER" id="PTHR13528:SF2">
    <property type="entry name" value="LARGE RIBOSOMAL SUBUNIT PROTEIN BL28M"/>
    <property type="match status" value="1"/>
</dbReference>
<dbReference type="Pfam" id="PF00830">
    <property type="entry name" value="Ribosomal_L28"/>
    <property type="match status" value="1"/>
</dbReference>
<dbReference type="SUPFAM" id="SSF143800">
    <property type="entry name" value="L28p-like"/>
    <property type="match status" value="1"/>
</dbReference>
<comment type="similarity">
    <text evidence="1">Belongs to the bacterial ribosomal protein bL28 family.</text>
</comment>
<feature type="chain" id="PRO_1000007343" description="Large ribosomal subunit protein bL28">
    <location>
        <begin position="1"/>
        <end position="78"/>
    </location>
</feature>
<accession>Q57IA5</accession>
<keyword id="KW-0687">Ribonucleoprotein</keyword>
<keyword id="KW-0689">Ribosomal protein</keyword>
<name>RL28_SALCH</name>
<evidence type="ECO:0000255" key="1">
    <source>
        <dbReference type="HAMAP-Rule" id="MF_00373"/>
    </source>
</evidence>
<evidence type="ECO:0000305" key="2"/>
<gene>
    <name evidence="1" type="primary">rpmB</name>
    <name type="ordered locus">SCH_3651</name>
</gene>
<protein>
    <recommendedName>
        <fullName evidence="1">Large ribosomal subunit protein bL28</fullName>
    </recommendedName>
    <alternativeName>
        <fullName evidence="2">50S ribosomal protein L28</fullName>
    </alternativeName>
</protein>
<proteinExistence type="inferred from homology"/>
<sequence length="78" mass="9051">MSRVCQVTGKRPVTGNNRSHALNATKRRFLPNLHSHRFWVESEKRFVTLRVSAKGMRIIDKKGIETVLSELRARGEKY</sequence>
<reference key="1">
    <citation type="journal article" date="2005" name="Nucleic Acids Res.">
        <title>The genome sequence of Salmonella enterica serovar Choleraesuis, a highly invasive and resistant zoonotic pathogen.</title>
        <authorList>
            <person name="Chiu C.-H."/>
            <person name="Tang P."/>
            <person name="Chu C."/>
            <person name="Hu S."/>
            <person name="Bao Q."/>
            <person name="Yu J."/>
            <person name="Chou Y.-Y."/>
            <person name="Wang H.-S."/>
            <person name="Lee Y.-S."/>
        </authorList>
    </citation>
    <scope>NUCLEOTIDE SEQUENCE [LARGE SCALE GENOMIC DNA]</scope>
    <source>
        <strain>SC-B67</strain>
    </source>
</reference>